<accession>P51537</accession>
<sequence length="378" mass="41442">MADIQLSKYHVSKDIGFLLEPLQDVLPDYFEPWNRLAKSLPELVASHKFRDAVKEMPLLDQSKLAGYRQKRLAHLQLVLITSGYLWQEGEGGAVQRLPECVSKPLWNVSNDLGLKPVLTFADICLTNCKVKNGDIEVMYNLPGGAGTEWFLKVCGLVELAFGKSGQAIQNVLDGAKANDKAKMASGFTDLTAAIGNMQTALARMNENLTPEHFYNGVRPFLNGFGGPASPISGGLVYEGVSDKPVTMIGGSAAQSSTMQVLDGLLGITHSPEKQAFLDEIRNYMPPSHKQMLADLTNMPRKVPQVVAETKDANLTKAFNGCVAAFVQYRSYHIQVVTKYIVTASKSDSPKSLAYKDTGKSDLIPFLKEVRDDTEKVQQ</sequence>
<protein>
    <recommendedName>
        <fullName>Myoglobin</fullName>
    </recommendedName>
</protein>
<proteinExistence type="evidence at transcript level"/>
<reference key="1">
    <citation type="journal article" date="1994" name="J. Protein Chem.">
        <title>Abalone myoglobins evolved from indoleamine dioxygenase: the cDNA-derived amino acid sequence of myoglobin from Nordotis madaka.</title>
        <authorList>
            <person name="Suzuki T."/>
        </authorList>
    </citation>
    <scope>NUCLEOTIDE SEQUENCE [MRNA]</scope>
    <source>
        <tissue>Red muscle</tissue>
    </source>
</reference>
<comment type="function">
    <text>Serves a reserve supply of oxygen and facilitates the movement of oxygen within muscles.</text>
</comment>
<comment type="cofactor">
    <cofactor evidence="1">
        <name>heme</name>
        <dbReference type="ChEBI" id="CHEBI:30413"/>
    </cofactor>
    <text evidence="1">Binds 1 heme group per subunit.</text>
</comment>
<comment type="subunit">
    <text evidence="1">Homodimer.</text>
</comment>
<comment type="similarity">
    <text evidence="2">Belongs to the indoleamine 2,3-dioxygenase family.</text>
</comment>
<name>MYG_HALMK</name>
<feature type="initiator methionine" description="Removed" evidence="1">
    <location>
        <position position="1"/>
    </location>
</feature>
<feature type="chain" id="PRO_0000215206" description="Myoglobin">
    <location>
        <begin position="2"/>
        <end position="378"/>
    </location>
</feature>
<feature type="binding site" description="proximal binding residue" evidence="1">
    <location>
        <position position="332"/>
    </location>
    <ligand>
        <name>heme</name>
        <dbReference type="ChEBI" id="CHEBI:30413"/>
    </ligand>
    <ligandPart>
        <name>Fe</name>
        <dbReference type="ChEBI" id="CHEBI:18248"/>
    </ligandPart>
</feature>
<dbReference type="EMBL" id="S73262">
    <property type="protein sequence ID" value="AAB31096.1"/>
    <property type="molecule type" value="mRNA"/>
</dbReference>
<dbReference type="EMBL" id="D58415">
    <property type="protein sequence ID" value="BAA09586.1"/>
    <property type="molecule type" value="mRNA"/>
</dbReference>
<dbReference type="SMR" id="P51537"/>
<dbReference type="GO" id="GO:0005737">
    <property type="term" value="C:cytoplasm"/>
    <property type="evidence" value="ECO:0007669"/>
    <property type="project" value="TreeGrafter"/>
</dbReference>
<dbReference type="GO" id="GO:0020037">
    <property type="term" value="F:heme binding"/>
    <property type="evidence" value="ECO:0007669"/>
    <property type="project" value="InterPro"/>
</dbReference>
<dbReference type="GO" id="GO:0033754">
    <property type="term" value="F:indoleamine 2,3-dioxygenase activity"/>
    <property type="evidence" value="ECO:0007669"/>
    <property type="project" value="TreeGrafter"/>
</dbReference>
<dbReference type="GO" id="GO:0046872">
    <property type="term" value="F:metal ion binding"/>
    <property type="evidence" value="ECO:0007669"/>
    <property type="project" value="UniProtKB-KW"/>
</dbReference>
<dbReference type="GO" id="GO:0005344">
    <property type="term" value="F:oxygen carrier activity"/>
    <property type="evidence" value="ECO:0007669"/>
    <property type="project" value="UniProtKB-KW"/>
</dbReference>
<dbReference type="GO" id="GO:0004833">
    <property type="term" value="F:tryptophan 2,3-dioxygenase activity"/>
    <property type="evidence" value="ECO:0007669"/>
    <property type="project" value="TreeGrafter"/>
</dbReference>
<dbReference type="GO" id="GO:0034354">
    <property type="term" value="P:'de novo' NAD biosynthetic process from L-tryptophan"/>
    <property type="evidence" value="ECO:0007669"/>
    <property type="project" value="TreeGrafter"/>
</dbReference>
<dbReference type="GO" id="GO:0019441">
    <property type="term" value="P:L-tryptophan catabolic process to kynurenine"/>
    <property type="evidence" value="ECO:0007669"/>
    <property type="project" value="InterPro"/>
</dbReference>
<dbReference type="Gene3D" id="1.20.58.480">
    <property type="match status" value="1"/>
</dbReference>
<dbReference type="InterPro" id="IPR000898">
    <property type="entry name" value="Indolamine_dOase"/>
</dbReference>
<dbReference type="InterPro" id="IPR037217">
    <property type="entry name" value="Trp/Indoleamine_2_3_dOase-like"/>
</dbReference>
<dbReference type="PANTHER" id="PTHR28657">
    <property type="entry name" value="INDOLEAMINE 2,3-DIOXYGENASE"/>
    <property type="match status" value="1"/>
</dbReference>
<dbReference type="PANTHER" id="PTHR28657:SF5">
    <property type="entry name" value="INDOLEAMINE 2,3-DIOXYGENASE"/>
    <property type="match status" value="1"/>
</dbReference>
<dbReference type="Pfam" id="PF01231">
    <property type="entry name" value="IDO"/>
    <property type="match status" value="1"/>
</dbReference>
<dbReference type="SUPFAM" id="SSF140959">
    <property type="entry name" value="Indolic compounds 2,3-dioxygenase-like"/>
    <property type="match status" value="1"/>
</dbReference>
<dbReference type="PROSITE" id="PS00876">
    <property type="entry name" value="IDO_1"/>
    <property type="match status" value="1"/>
</dbReference>
<dbReference type="PROSITE" id="PS00877">
    <property type="entry name" value="IDO_2"/>
    <property type="match status" value="1"/>
</dbReference>
<organism>
    <name type="scientific">Haliotis madaka</name>
    <name type="common">Giant abalone</name>
    <name type="synonym">Nordotis madaka</name>
    <dbReference type="NCBI Taxonomy" id="81897"/>
    <lineage>
        <taxon>Eukaryota</taxon>
        <taxon>Metazoa</taxon>
        <taxon>Spiralia</taxon>
        <taxon>Lophotrochozoa</taxon>
        <taxon>Mollusca</taxon>
        <taxon>Gastropoda</taxon>
        <taxon>Vetigastropoda</taxon>
        <taxon>Lepetellida</taxon>
        <taxon>Haliotoidea</taxon>
        <taxon>Haliotidae</taxon>
        <taxon>Haliotis</taxon>
    </lineage>
</organism>
<keyword id="KW-0349">Heme</keyword>
<keyword id="KW-0408">Iron</keyword>
<keyword id="KW-0479">Metal-binding</keyword>
<keyword id="KW-0561">Oxygen transport</keyword>
<keyword id="KW-0813">Transport</keyword>
<evidence type="ECO:0000250" key="1"/>
<evidence type="ECO:0000305" key="2"/>